<keyword id="KW-1185">Reference proteome</keyword>
<keyword id="KW-0687">Ribonucleoprotein</keyword>
<dbReference type="EMBL" id="AL445067">
    <property type="protein sequence ID" value="CAC12364.1"/>
    <property type="molecule type" value="Genomic_DNA"/>
</dbReference>
<dbReference type="RefSeq" id="WP_010901647.1">
    <property type="nucleotide sequence ID" value="NC_002578.1"/>
</dbReference>
<dbReference type="SMR" id="P57670"/>
<dbReference type="FunCoup" id="P57670">
    <property type="interactions" value="107"/>
</dbReference>
<dbReference type="STRING" id="273075.gene:9572463"/>
<dbReference type="PaxDb" id="273075-Ta1240"/>
<dbReference type="EnsemblBacteria" id="CAC12364">
    <property type="protein sequence ID" value="CAC12364"/>
    <property type="gene ID" value="CAC12364"/>
</dbReference>
<dbReference type="KEGG" id="tac:Ta1240"/>
<dbReference type="eggNOG" id="arCOG00998">
    <property type="taxonomic scope" value="Archaea"/>
</dbReference>
<dbReference type="HOGENOM" id="CLU_076902_11_1_2"/>
<dbReference type="InParanoid" id="P57670"/>
<dbReference type="OrthoDB" id="371816at2157"/>
<dbReference type="Proteomes" id="UP000001024">
    <property type="component" value="Chromosome"/>
</dbReference>
<dbReference type="GO" id="GO:1990904">
    <property type="term" value="C:ribonucleoprotein complex"/>
    <property type="evidence" value="ECO:0007669"/>
    <property type="project" value="UniProtKB-KW"/>
</dbReference>
<dbReference type="GO" id="GO:0120114">
    <property type="term" value="C:Sm-like protein family complex"/>
    <property type="evidence" value="ECO:0007669"/>
    <property type="project" value="UniProtKB-ARBA"/>
</dbReference>
<dbReference type="GO" id="GO:0003723">
    <property type="term" value="F:RNA binding"/>
    <property type="evidence" value="ECO:0007669"/>
    <property type="project" value="InterPro"/>
</dbReference>
<dbReference type="GO" id="GO:0000398">
    <property type="term" value="P:mRNA splicing, via spliceosome"/>
    <property type="evidence" value="ECO:0007669"/>
    <property type="project" value="InterPro"/>
</dbReference>
<dbReference type="CDD" id="cd01731">
    <property type="entry name" value="archaeal_Sm1"/>
    <property type="match status" value="1"/>
</dbReference>
<dbReference type="Gene3D" id="2.30.30.100">
    <property type="match status" value="1"/>
</dbReference>
<dbReference type="HAMAP" id="MF_00257">
    <property type="entry name" value="Lsm_RuxX"/>
    <property type="match status" value="1"/>
</dbReference>
<dbReference type="InterPro" id="IPR016487">
    <property type="entry name" value="Lsm6/sSmF"/>
</dbReference>
<dbReference type="InterPro" id="IPR010920">
    <property type="entry name" value="LSM_dom_sf"/>
</dbReference>
<dbReference type="InterPro" id="IPR047575">
    <property type="entry name" value="Sm"/>
</dbReference>
<dbReference type="InterPro" id="IPR001163">
    <property type="entry name" value="Sm_dom_euk/arc"/>
</dbReference>
<dbReference type="InterPro" id="IPR022901">
    <property type="entry name" value="snRNP_Sm-like_arc"/>
</dbReference>
<dbReference type="NCBIfam" id="NF001963">
    <property type="entry name" value="PRK00737.1"/>
    <property type="match status" value="1"/>
</dbReference>
<dbReference type="PANTHER" id="PTHR11021:SF0">
    <property type="entry name" value="SMALL NUCLEAR RIBONUCLEOPROTEIN F"/>
    <property type="match status" value="1"/>
</dbReference>
<dbReference type="PANTHER" id="PTHR11021">
    <property type="entry name" value="SMALL NUCLEAR RIBONUCLEOPROTEIN F SNRNP-F"/>
    <property type="match status" value="1"/>
</dbReference>
<dbReference type="Pfam" id="PF01423">
    <property type="entry name" value="LSM"/>
    <property type="match status" value="1"/>
</dbReference>
<dbReference type="PIRSF" id="PIRSF006609">
    <property type="entry name" value="snRNP_SmF"/>
    <property type="match status" value="1"/>
</dbReference>
<dbReference type="SMART" id="SM00651">
    <property type="entry name" value="Sm"/>
    <property type="match status" value="1"/>
</dbReference>
<dbReference type="SUPFAM" id="SSF50182">
    <property type="entry name" value="Sm-like ribonucleoproteins"/>
    <property type="match status" value="1"/>
</dbReference>
<dbReference type="PROSITE" id="PS52002">
    <property type="entry name" value="SM"/>
    <property type="match status" value="1"/>
</dbReference>
<protein>
    <recommendedName>
        <fullName>Putative snRNP Sm-like protein</fullName>
    </recommendedName>
</protein>
<reference key="1">
    <citation type="journal article" date="2000" name="Nature">
        <title>The genome sequence of the thermoacidophilic scavenger Thermoplasma acidophilum.</title>
        <authorList>
            <person name="Ruepp A."/>
            <person name="Graml W."/>
            <person name="Santos-Martinez M.-L."/>
            <person name="Koretke K.K."/>
            <person name="Volker C."/>
            <person name="Mewes H.-W."/>
            <person name="Frishman D."/>
            <person name="Stocker S."/>
            <person name="Lupas A.N."/>
            <person name="Baumeister W."/>
        </authorList>
    </citation>
    <scope>NUCLEOTIDE SEQUENCE [LARGE SCALE GENOMIC DNA]</scope>
    <source>
        <strain>ATCC 25905 / DSM 1728 / JCM 9062 / NBRC 15155 / AMRC-C165</strain>
    </source>
</reference>
<organism>
    <name type="scientific">Thermoplasma acidophilum (strain ATCC 25905 / DSM 1728 / JCM 9062 / NBRC 15155 / AMRC-C165)</name>
    <dbReference type="NCBI Taxonomy" id="273075"/>
    <lineage>
        <taxon>Archaea</taxon>
        <taxon>Methanobacteriati</taxon>
        <taxon>Thermoplasmatota</taxon>
        <taxon>Thermoplasmata</taxon>
        <taxon>Thermoplasmatales</taxon>
        <taxon>Thermoplasmataceae</taxon>
        <taxon>Thermoplasma</taxon>
    </lineage>
</organism>
<comment type="similarity">
    <text evidence="2">Belongs to the snRNP Sm proteins family.</text>
</comment>
<accession>P57670</accession>
<gene>
    <name type="ordered locus">Ta1240</name>
</gene>
<evidence type="ECO:0000255" key="1">
    <source>
        <dbReference type="PROSITE-ProRule" id="PRU01346"/>
    </source>
</evidence>
<evidence type="ECO:0000305" key="2"/>
<name>RUXX_THEAC</name>
<sequence>MPKTPANVKPMDVLKSALSRNVLIDVKGNREYSGILEGYDVYMNIVLQNASEIINGENKGVYDRVLVRGDNVIFVSPSKGDGS</sequence>
<proteinExistence type="inferred from homology"/>
<feature type="chain" id="PRO_0000125600" description="Putative snRNP Sm-like protein">
    <location>
        <begin position="1"/>
        <end position="83"/>
    </location>
</feature>
<feature type="domain" description="Sm" evidence="1">
    <location>
        <begin position="9"/>
        <end position="81"/>
    </location>
</feature>